<proteinExistence type="evidence at transcript level"/>
<reference key="1">
    <citation type="journal article" date="1996" name="Plant Mol. Biol.">
        <title>Phenylalanine ammonia-lyase gene structure, expression, and evolution in Nicotiana.</title>
        <authorList>
            <person name="Fukasawa-Akada T."/>
            <person name="Kung S.D."/>
            <person name="Watson J.C."/>
        </authorList>
    </citation>
    <scope>NUCLEOTIDE SEQUENCE [GENOMIC DNA]</scope>
    <scope>TISSUE SPECIFICITY</scope>
    <scope>DEVELOPMENTAL STAGE</scope>
    <scope>INDUCTION</scope>
</reference>
<reference key="2">
    <citation type="submission" date="1997-10" db="EMBL/GenBank/DDBJ databases">
        <authorList>
            <person name="Taguchi G."/>
            <person name="Sharan M."/>
            <person name="Gonda K."/>
            <person name="Yanagisawa K."/>
            <person name="Shimosaka M."/>
            <person name="Hayashida N."/>
            <person name="Okazaki M."/>
        </authorList>
    </citation>
    <scope>NUCLEOTIDE SEQUENCE [GENOMIC DNA]</scope>
    <source>
        <strain>cv. Bright Yellow</strain>
        <tissue>Callus</tissue>
    </source>
</reference>
<name>PAL1_TOBAC</name>
<gene>
    <name type="primary">TPA1</name>
    <name type="synonym">PALB</name>
</gene>
<feature type="chain" id="PRO_0000215423" description="Phenylalanine ammonia-lyase">
    <location>
        <begin position="1"/>
        <end position="715"/>
    </location>
</feature>
<feature type="active site" description="Proton donor/acceptor" evidence="3">
    <location>
        <position position="107"/>
    </location>
</feature>
<feature type="binding site" evidence="3">
    <location>
        <position position="259"/>
    </location>
    <ligand>
        <name>(E)-cinnamate</name>
        <dbReference type="ChEBI" id="CHEBI:15669"/>
    </ligand>
</feature>
<feature type="binding site" evidence="3">
    <location>
        <position position="347"/>
    </location>
    <ligand>
        <name>(E)-cinnamate</name>
        <dbReference type="ChEBI" id="CHEBI:15669"/>
    </ligand>
</feature>
<feature type="binding site" evidence="3">
    <location>
        <position position="353"/>
    </location>
    <ligand>
        <name>(E)-cinnamate</name>
        <dbReference type="ChEBI" id="CHEBI:15669"/>
    </ligand>
</feature>
<feature type="binding site" evidence="3">
    <location>
        <position position="383"/>
    </location>
    <ligand>
        <name>(E)-cinnamate</name>
        <dbReference type="ChEBI" id="CHEBI:15669"/>
    </ligand>
</feature>
<feature type="binding site" evidence="1">
    <location>
        <position position="455"/>
    </location>
    <ligand>
        <name>(E)-cinnamate</name>
        <dbReference type="ChEBI" id="CHEBI:15669"/>
    </ligand>
</feature>
<feature type="binding site" evidence="1">
    <location>
        <position position="483"/>
    </location>
    <ligand>
        <name>(E)-cinnamate</name>
        <dbReference type="ChEBI" id="CHEBI:15669"/>
    </ligand>
</feature>
<feature type="binding site" evidence="3">
    <location>
        <position position="486"/>
    </location>
    <ligand>
        <name>(E)-cinnamate</name>
        <dbReference type="ChEBI" id="CHEBI:15669"/>
    </ligand>
</feature>
<feature type="modified residue" description="2,3-didehydroalanine (Ser)" evidence="4">
    <location>
        <position position="202"/>
    </location>
</feature>
<feature type="cross-link" description="5-imidazolinone (Ala-Gly)" evidence="3">
    <location>
        <begin position="201"/>
        <end position="203"/>
    </location>
</feature>
<protein>
    <recommendedName>
        <fullName>Phenylalanine ammonia-lyase</fullName>
        <ecNumber evidence="2">4.3.1.24</ecNumber>
    </recommendedName>
</protein>
<sequence length="715" mass="77781">MASNGHVNGGENFELCKKSADPLNWEMAAESLRGSHLDEVKKMVSEFRKPMVKLGGESLTVAQVAAIAVRDKSANGVKVELSEEARAGVKASSDWVMDSMNKGTDSYGVTTGFGATSHRRTKNGGALQKELIRFLNAGVFGNGTETSHTLPHSATRAAMLVRINTLLQGYSGIRFEILEAITKLINSNITPCLPLRGTITASGDLVPLSYIAGLLTGRPNSKAVGPNGETLNAEEAFRVAGVNGGFFELQPKEGLALVNGTAVGSGMASMVLFDSNILAVMSEVLSAIFAEVMNGKPEFTDHLTHKLKHHPGQIEAAAIMEHILDGSSYVKAAQKLHEMDPLQKPKQDRYALRTSPQWLGPQIEVIRAATKMIEREINSVNDNPLIDVSRNKALHGGNFQGTPIGVSMDNARLALASIGKLMFAQFSELVNDYYNNGLPSNLTASRNPSLDYGFKGAEIAMASYCSELQFLANPVTNHVQSAEQHNQDVNSLGLISARKTAEAVDILKLMSSTYLVALCQAIDLRHLEENLKNAVKNTVSQVAKRTLTMGANGELHPARFCEKELLRIVDREYLFAYADDPCSCNYPLMQKLRQVLVDHAMNNGESEKNVNSSIFQKIGAFEDELKAVLPKEVESARAALESGNPAIPNRITECRSYPLYRFVRKELGTELLTGEKVRSPGEECDKVFTAMCNGQIIDPMLECLKSWNGAPLPIC</sequence>
<dbReference type="EC" id="4.3.1.24" evidence="2"/>
<dbReference type="EMBL" id="M84466">
    <property type="protein sequence ID" value="AAA34122.1"/>
    <property type="molecule type" value="Genomic_DNA"/>
</dbReference>
<dbReference type="EMBL" id="AB008200">
    <property type="protein sequence ID" value="BAA22948.1"/>
    <property type="molecule type" value="Genomic_DNA"/>
</dbReference>
<dbReference type="PIR" id="S66343">
    <property type="entry name" value="S66343"/>
</dbReference>
<dbReference type="RefSeq" id="XP_016435186.1">
    <property type="nucleotide sequence ID" value="XM_016579700.1"/>
</dbReference>
<dbReference type="SMR" id="P25872"/>
<dbReference type="STRING" id="4097.P25872"/>
<dbReference type="PaxDb" id="4097-P25872"/>
<dbReference type="KEGG" id="nta:107761482"/>
<dbReference type="OMA" id="YSLRCMP"/>
<dbReference type="OrthoDB" id="10051290at2759"/>
<dbReference type="PhylomeDB" id="P25872"/>
<dbReference type="BRENDA" id="4.3.1.24">
    <property type="organism ID" value="3645"/>
</dbReference>
<dbReference type="SABIO-RK" id="P25872"/>
<dbReference type="UniPathway" id="UPA00713">
    <property type="reaction ID" value="UER00725"/>
</dbReference>
<dbReference type="Proteomes" id="UP000084051">
    <property type="component" value="Unplaced"/>
</dbReference>
<dbReference type="GO" id="GO:0005737">
    <property type="term" value="C:cytoplasm"/>
    <property type="evidence" value="ECO:0007669"/>
    <property type="project" value="UniProtKB-SubCell"/>
</dbReference>
<dbReference type="GO" id="GO:0016841">
    <property type="term" value="F:ammonia-lyase activity"/>
    <property type="evidence" value="ECO:0000318"/>
    <property type="project" value="GO_Central"/>
</dbReference>
<dbReference type="GO" id="GO:0045548">
    <property type="term" value="F:phenylalanine ammonia-lyase activity"/>
    <property type="evidence" value="ECO:0007669"/>
    <property type="project" value="UniProtKB-EC"/>
</dbReference>
<dbReference type="GO" id="GO:0009800">
    <property type="term" value="P:cinnamic acid biosynthetic process"/>
    <property type="evidence" value="ECO:0007669"/>
    <property type="project" value="UniProtKB-UniPathway"/>
</dbReference>
<dbReference type="GO" id="GO:0006559">
    <property type="term" value="P:L-phenylalanine catabolic process"/>
    <property type="evidence" value="ECO:0007669"/>
    <property type="project" value="UniProtKB-KW"/>
</dbReference>
<dbReference type="CDD" id="cd00332">
    <property type="entry name" value="PAL-HAL"/>
    <property type="match status" value="1"/>
</dbReference>
<dbReference type="FunFam" id="1.10.274.20:FF:000001">
    <property type="entry name" value="Phenylalanine ammonia-lyase"/>
    <property type="match status" value="1"/>
</dbReference>
<dbReference type="FunFam" id="1.10.275.10:FF:000009">
    <property type="entry name" value="Phenylalanine ammonia-lyase"/>
    <property type="match status" value="1"/>
</dbReference>
<dbReference type="FunFam" id="1.20.200.10:FF:000009">
    <property type="entry name" value="Phenylalanine ammonia-lyase"/>
    <property type="match status" value="1"/>
</dbReference>
<dbReference type="Gene3D" id="1.20.200.10">
    <property type="entry name" value="Fumarase/aspartase (Central domain)"/>
    <property type="match status" value="1"/>
</dbReference>
<dbReference type="Gene3D" id="1.10.275.10">
    <property type="entry name" value="Fumarase/aspartase (N-terminal domain)"/>
    <property type="match status" value="1"/>
</dbReference>
<dbReference type="Gene3D" id="1.10.274.20">
    <property type="entry name" value="Phenylalanine ammonia-lyase 1, domain 3"/>
    <property type="match status" value="1"/>
</dbReference>
<dbReference type="InterPro" id="IPR001106">
    <property type="entry name" value="Aromatic_Lyase"/>
</dbReference>
<dbReference type="InterPro" id="IPR024083">
    <property type="entry name" value="Fumarase/histidase_N"/>
</dbReference>
<dbReference type="InterPro" id="IPR008948">
    <property type="entry name" value="L-Aspartase-like"/>
</dbReference>
<dbReference type="InterPro" id="IPR022313">
    <property type="entry name" value="Phe/His_NH3-lyase_AS"/>
</dbReference>
<dbReference type="InterPro" id="IPR005922">
    <property type="entry name" value="Phe_NH3-lyase"/>
</dbReference>
<dbReference type="InterPro" id="IPR023144">
    <property type="entry name" value="Phe_NH3-lyase_shielding_dom_sf"/>
</dbReference>
<dbReference type="NCBIfam" id="TIGR01226">
    <property type="entry name" value="phe_am_lyase"/>
    <property type="match status" value="1"/>
</dbReference>
<dbReference type="PANTHER" id="PTHR10362">
    <property type="entry name" value="HISTIDINE AMMONIA-LYASE"/>
    <property type="match status" value="1"/>
</dbReference>
<dbReference type="Pfam" id="PF00221">
    <property type="entry name" value="Lyase_aromatic"/>
    <property type="match status" value="1"/>
</dbReference>
<dbReference type="SUPFAM" id="SSF48557">
    <property type="entry name" value="L-aspartase-like"/>
    <property type="match status" value="1"/>
</dbReference>
<dbReference type="PROSITE" id="PS00488">
    <property type="entry name" value="PAL_HISTIDASE"/>
    <property type="match status" value="1"/>
</dbReference>
<organism>
    <name type="scientific">Nicotiana tabacum</name>
    <name type="common">Common tobacco</name>
    <dbReference type="NCBI Taxonomy" id="4097"/>
    <lineage>
        <taxon>Eukaryota</taxon>
        <taxon>Viridiplantae</taxon>
        <taxon>Streptophyta</taxon>
        <taxon>Embryophyta</taxon>
        <taxon>Tracheophyta</taxon>
        <taxon>Spermatophyta</taxon>
        <taxon>Magnoliopsida</taxon>
        <taxon>eudicotyledons</taxon>
        <taxon>Gunneridae</taxon>
        <taxon>Pentapetalae</taxon>
        <taxon>asterids</taxon>
        <taxon>lamiids</taxon>
        <taxon>Solanales</taxon>
        <taxon>Solanaceae</taxon>
        <taxon>Nicotianoideae</taxon>
        <taxon>Nicotianeae</taxon>
        <taxon>Nicotiana</taxon>
    </lineage>
</organism>
<comment type="function">
    <text evidence="2">This is a key enzyme of plant metabolism catalyzing the first reaction in the biosynthesis from L-phenylalanine of a wide variety of natural products based on the phenylpropane skeleton.</text>
</comment>
<comment type="catalytic activity">
    <reaction evidence="2">
        <text>L-phenylalanine = (E)-cinnamate + NH4(+)</text>
        <dbReference type="Rhea" id="RHEA:21384"/>
        <dbReference type="ChEBI" id="CHEBI:15669"/>
        <dbReference type="ChEBI" id="CHEBI:28938"/>
        <dbReference type="ChEBI" id="CHEBI:58095"/>
        <dbReference type="EC" id="4.3.1.24"/>
    </reaction>
</comment>
<comment type="pathway">
    <text evidence="6">Phenylpropanoid metabolism; trans-cinnamate biosynthesis; trans-cinnamate from L-phenylalanine: step 1/1.</text>
</comment>
<comment type="subunit">
    <text evidence="2">Homotetramer.</text>
</comment>
<comment type="subcellular location">
    <subcellularLocation>
        <location evidence="6">Cytoplasm</location>
    </subcellularLocation>
</comment>
<comment type="tissue specificity">
    <text evidence="5">Expressed in flowers, roots, leaves and stems.</text>
</comment>
<comment type="developmental stage">
    <text evidence="5">Expression declines during flower maturation but increases during leaf maturation.</text>
</comment>
<comment type="induction">
    <text evidence="5">Rapidly induced after wounding.</text>
</comment>
<comment type="PTM">
    <text evidence="3">Contains an active site 4-methylidene-imidazol-5-one (MIO), which is formed autocatalytically by cyclization and dehydration of residues Ala-Ser-Gly.</text>
</comment>
<comment type="similarity">
    <text evidence="6">Belongs to the PAL/histidase family.</text>
</comment>
<evidence type="ECO:0000250" key="1">
    <source>
        <dbReference type="UniProtKB" id="P11544"/>
    </source>
</evidence>
<evidence type="ECO:0000250" key="2">
    <source>
        <dbReference type="UniProtKB" id="P24481"/>
    </source>
</evidence>
<evidence type="ECO:0000250" key="3">
    <source>
        <dbReference type="UniProtKB" id="Q68G84"/>
    </source>
</evidence>
<evidence type="ECO:0000255" key="4">
    <source>
        <dbReference type="PROSITE-ProRule" id="PRU10122"/>
    </source>
</evidence>
<evidence type="ECO:0000269" key="5">
    <source>
    </source>
</evidence>
<evidence type="ECO:0000305" key="6"/>
<keyword id="KW-0963">Cytoplasm</keyword>
<keyword id="KW-0456">Lyase</keyword>
<keyword id="KW-0585">Phenylalanine catabolism</keyword>
<keyword id="KW-0587">Phenylpropanoid metabolism</keyword>
<keyword id="KW-1185">Reference proteome</keyword>
<accession>P25872</accession>